<dbReference type="EMBL" id="CP000948">
    <property type="protein sequence ID" value="ACB03802.1"/>
    <property type="molecule type" value="Genomic_DNA"/>
</dbReference>
<dbReference type="RefSeq" id="WP_000080947.1">
    <property type="nucleotide sequence ID" value="NC_010473.1"/>
</dbReference>
<dbReference type="SMR" id="B1XCL1"/>
<dbReference type="GeneID" id="75172757"/>
<dbReference type="KEGG" id="ecd:ECDH10B_2841"/>
<dbReference type="HOGENOM" id="CLU_114845_0_0_6"/>
<dbReference type="GO" id="GO:0010181">
    <property type="term" value="F:FMN binding"/>
    <property type="evidence" value="ECO:0007669"/>
    <property type="project" value="InterPro"/>
</dbReference>
<dbReference type="GO" id="GO:0036211">
    <property type="term" value="P:protein modification process"/>
    <property type="evidence" value="ECO:0007669"/>
    <property type="project" value="InterPro"/>
</dbReference>
<dbReference type="FunFam" id="3.40.50.360:FF:000005">
    <property type="entry name" value="Protein NrdI"/>
    <property type="match status" value="1"/>
</dbReference>
<dbReference type="Gene3D" id="3.40.50.360">
    <property type="match status" value="1"/>
</dbReference>
<dbReference type="HAMAP" id="MF_00128">
    <property type="entry name" value="NrdI"/>
    <property type="match status" value="1"/>
</dbReference>
<dbReference type="InterPro" id="IPR029039">
    <property type="entry name" value="Flavoprotein-like_sf"/>
</dbReference>
<dbReference type="InterPro" id="IPR020852">
    <property type="entry name" value="RNR_Ib_NrdI_bac"/>
</dbReference>
<dbReference type="InterPro" id="IPR004465">
    <property type="entry name" value="RNR_NrdI"/>
</dbReference>
<dbReference type="NCBIfam" id="TIGR00333">
    <property type="entry name" value="nrdI"/>
    <property type="match status" value="1"/>
</dbReference>
<dbReference type="PANTHER" id="PTHR37297">
    <property type="entry name" value="PROTEIN NRDI"/>
    <property type="match status" value="1"/>
</dbReference>
<dbReference type="PANTHER" id="PTHR37297:SF1">
    <property type="entry name" value="PROTEIN NRDI"/>
    <property type="match status" value="1"/>
</dbReference>
<dbReference type="Pfam" id="PF07972">
    <property type="entry name" value="Flavodoxin_NdrI"/>
    <property type="match status" value="1"/>
</dbReference>
<dbReference type="PIRSF" id="PIRSF005087">
    <property type="entry name" value="NrdI"/>
    <property type="match status" value="1"/>
</dbReference>
<dbReference type="SUPFAM" id="SSF52218">
    <property type="entry name" value="Flavoproteins"/>
    <property type="match status" value="1"/>
</dbReference>
<name>NRDI_ECODH</name>
<gene>
    <name evidence="1" type="primary">nrdI</name>
    <name type="ordered locus">ECDH10B_2841</name>
</gene>
<comment type="function">
    <text evidence="1">Probably involved in ribonucleotide reductase function.</text>
</comment>
<comment type="similarity">
    <text evidence="1">Belongs to the NrdI family.</text>
</comment>
<organism>
    <name type="scientific">Escherichia coli (strain K12 / DH10B)</name>
    <dbReference type="NCBI Taxonomy" id="316385"/>
    <lineage>
        <taxon>Bacteria</taxon>
        <taxon>Pseudomonadati</taxon>
        <taxon>Pseudomonadota</taxon>
        <taxon>Gammaproteobacteria</taxon>
        <taxon>Enterobacterales</taxon>
        <taxon>Enterobacteriaceae</taxon>
        <taxon>Escherichia</taxon>
    </lineage>
</organism>
<accession>B1XCL1</accession>
<evidence type="ECO:0000255" key="1">
    <source>
        <dbReference type="HAMAP-Rule" id="MF_00128"/>
    </source>
</evidence>
<proteinExistence type="inferred from homology"/>
<feature type="chain" id="PRO_1000095620" description="Protein NrdI">
    <location>
        <begin position="1"/>
        <end position="136"/>
    </location>
</feature>
<reference key="1">
    <citation type="journal article" date="2008" name="J. Bacteriol.">
        <title>The complete genome sequence of Escherichia coli DH10B: insights into the biology of a laboratory workhorse.</title>
        <authorList>
            <person name="Durfee T."/>
            <person name="Nelson R."/>
            <person name="Baldwin S."/>
            <person name="Plunkett G. III"/>
            <person name="Burland V."/>
            <person name="Mau B."/>
            <person name="Petrosino J.F."/>
            <person name="Qin X."/>
            <person name="Muzny D.M."/>
            <person name="Ayele M."/>
            <person name="Gibbs R.A."/>
            <person name="Csorgo B."/>
            <person name="Posfai G."/>
            <person name="Weinstock G.M."/>
            <person name="Blattner F.R."/>
        </authorList>
    </citation>
    <scope>NUCLEOTIDE SEQUENCE [LARGE SCALE GENOMIC DNA]</scope>
    <source>
        <strain>K12 / DH10B</strain>
    </source>
</reference>
<sequence length="136" mass="15340">MSQLVYFSSSSENTQRFIERLGLPAVRIPLNERERIQVDEPYILIVPSYGGGGTAGAVPRQVIRFLNDEHNRALLRGVIASGNRNFGEAYGRAGDVIARKCGVPWLYRFELMGTQSDIENVRKGVTEFWQRQPQNA</sequence>
<protein>
    <recommendedName>
        <fullName evidence="1">Protein NrdI</fullName>
    </recommendedName>
</protein>